<dbReference type="EMBL" id="AP006618">
    <property type="protein sequence ID" value="BAD59460.1"/>
    <property type="molecule type" value="Genomic_DNA"/>
</dbReference>
<dbReference type="RefSeq" id="WP_011211144.1">
    <property type="nucleotide sequence ID" value="NC_006361.1"/>
</dbReference>
<dbReference type="STRING" id="247156.NFA_46090"/>
<dbReference type="GeneID" id="61135213"/>
<dbReference type="KEGG" id="nfa:NFA_46090"/>
<dbReference type="eggNOG" id="COG5401">
    <property type="taxonomic scope" value="Bacteria"/>
</dbReference>
<dbReference type="HOGENOM" id="CLU_032207_1_0_11"/>
<dbReference type="OrthoDB" id="3226781at2"/>
<dbReference type="Proteomes" id="UP000006820">
    <property type="component" value="Chromosome"/>
</dbReference>
<dbReference type="GO" id="GO:0005886">
    <property type="term" value="C:plasma membrane"/>
    <property type="evidence" value="ECO:0007669"/>
    <property type="project" value="UniProtKB-SubCell"/>
</dbReference>
<dbReference type="HAMAP" id="MF_01373">
    <property type="entry name" value="LpqB_lipoprot"/>
    <property type="match status" value="1"/>
</dbReference>
<dbReference type="InterPro" id="IPR019606">
    <property type="entry name" value="GerMN"/>
</dbReference>
<dbReference type="InterPro" id="IPR023959">
    <property type="entry name" value="Lipoprotein_LpqB"/>
</dbReference>
<dbReference type="InterPro" id="IPR018910">
    <property type="entry name" value="Lipoprotein_LpqB_C"/>
</dbReference>
<dbReference type="NCBIfam" id="NF010141">
    <property type="entry name" value="PRK13616.1"/>
    <property type="match status" value="1"/>
</dbReference>
<dbReference type="Pfam" id="PF10646">
    <property type="entry name" value="Germane"/>
    <property type="match status" value="1"/>
</dbReference>
<dbReference type="Pfam" id="PF10647">
    <property type="entry name" value="Gmad1"/>
    <property type="match status" value="1"/>
</dbReference>
<dbReference type="SMART" id="SM00909">
    <property type="entry name" value="Germane"/>
    <property type="match status" value="1"/>
</dbReference>
<dbReference type="SUPFAM" id="SSF82171">
    <property type="entry name" value="DPP6 N-terminal domain-like"/>
    <property type="match status" value="1"/>
</dbReference>
<dbReference type="PROSITE" id="PS51257">
    <property type="entry name" value="PROKAR_LIPOPROTEIN"/>
    <property type="match status" value="1"/>
</dbReference>
<gene>
    <name evidence="1" type="primary">lpqB</name>
    <name type="ordered locus">NFA_46090</name>
</gene>
<proteinExistence type="inferred from homology"/>
<name>LPQB_NOCFA</name>
<accession>Q5YQT1</accession>
<protein>
    <recommendedName>
        <fullName evidence="1">Lipoprotein LpqB</fullName>
    </recommendedName>
</protein>
<feature type="signal peptide" evidence="1">
    <location>
        <begin position="1"/>
        <end position="27"/>
    </location>
</feature>
<feature type="chain" id="PRO_0000286726" description="Lipoprotein LpqB">
    <location>
        <begin position="28"/>
        <end position="604"/>
    </location>
</feature>
<feature type="region of interest" description="Disordered" evidence="2">
    <location>
        <begin position="35"/>
        <end position="60"/>
    </location>
</feature>
<feature type="lipid moiety-binding region" description="N-palmitoyl cysteine" evidence="1">
    <location>
        <position position="28"/>
    </location>
</feature>
<feature type="lipid moiety-binding region" description="S-diacylglycerol cysteine" evidence="1">
    <location>
        <position position="28"/>
    </location>
</feature>
<organism>
    <name type="scientific">Nocardia farcinica (strain IFM 10152)</name>
    <dbReference type="NCBI Taxonomy" id="247156"/>
    <lineage>
        <taxon>Bacteria</taxon>
        <taxon>Bacillati</taxon>
        <taxon>Actinomycetota</taxon>
        <taxon>Actinomycetes</taxon>
        <taxon>Mycobacteriales</taxon>
        <taxon>Nocardiaceae</taxon>
        <taxon>Nocardia</taxon>
    </lineage>
</organism>
<reference key="1">
    <citation type="journal article" date="2004" name="Proc. Natl. Acad. Sci. U.S.A.">
        <title>The complete genomic sequence of Nocardia farcinica IFM 10152.</title>
        <authorList>
            <person name="Ishikawa J."/>
            <person name="Yamashita A."/>
            <person name="Mikami Y."/>
            <person name="Hoshino Y."/>
            <person name="Kurita H."/>
            <person name="Hotta K."/>
            <person name="Shiba T."/>
            <person name="Hattori M."/>
        </authorList>
    </citation>
    <scope>NUCLEOTIDE SEQUENCE [LARGE SCALE GENOMIC DNA]</scope>
    <source>
        <strain>IFM 10152</strain>
    </source>
</reference>
<keyword id="KW-1003">Cell membrane</keyword>
<keyword id="KW-0449">Lipoprotein</keyword>
<keyword id="KW-0472">Membrane</keyword>
<keyword id="KW-0564">Palmitate</keyword>
<keyword id="KW-1185">Reference proteome</keyword>
<keyword id="KW-0732">Signal</keyword>
<comment type="subcellular location">
    <subcellularLocation>
        <location evidence="1">Cell membrane</location>
        <topology evidence="1">Lipid-anchor</topology>
    </subcellularLocation>
</comment>
<comment type="similarity">
    <text evidence="1">Belongs to the LpqB lipoprotein family.</text>
</comment>
<evidence type="ECO:0000255" key="1">
    <source>
        <dbReference type="HAMAP-Rule" id="MF_01373"/>
    </source>
</evidence>
<evidence type="ECO:0000256" key="2">
    <source>
        <dbReference type="SAM" id="MobiDB-lite"/>
    </source>
</evidence>
<sequence>MTMRAARLSGSTGLTAALVAVLLVLTGCASLPESSAPQALGTIDREPTSEGPTPPIAGRDPDLLLRDFLQATADPTNRHLAARQYMTPAASAQWDDSTSTTIVEKPDTLLESRDGDRATYRIRAQRMAELSADGAYRAVNEPTLENKIEMVKVDGEWRIAELPDGVVMDITAFTKSYRRYVLYFADPSGNTAVPDLRWLSVPKNQLTQRLLSLLSEGPHGAIGAVVRNQLAAPVALRGPITKANGDPDDVGVGLGGVRLDFAGAAALSQRDKELLAGQVVLTLAQADIPGPYMLLADGRPLDERYATNGWSAADVEYLSPSVQAQNRIGLHALRDGALTQVTDNGVVETPGYFGSVNNLQSAALSPDGQLVAAVADAGRPAPEPPRTLMVGTYGGPAFPVAEGGSITRPSWTGDGSAAWAVIDGDRVIRAVNDRATGTVSVQGVDISGLTADPAGPALRLPITELRISRTGVRAALIADGKVYVAVVERRPDGGYALTAPVPVAVGLSTKATSLSWIGGDTLLIAREGNIDPVSTVLIDGSEWTPVTSQNLTPPVRVITAAPGAQYVADSRGVLELTSNTTSELHYWTEMPGLVGTDAAPVLPG</sequence>